<protein>
    <recommendedName>
        <fullName>SH3 domain-binding glutamic acid-rich-like protein 3</fullName>
    </recommendedName>
</protein>
<gene>
    <name type="primary">SH3BGRL3</name>
</gene>
<evidence type="ECO:0000250" key="1">
    <source>
        <dbReference type="UniProtKB" id="Q91VW3"/>
    </source>
</evidence>
<evidence type="ECO:0000250" key="2">
    <source>
        <dbReference type="UniProtKB" id="Q9H299"/>
    </source>
</evidence>
<evidence type="ECO:0000255" key="3"/>
<evidence type="ECO:0000255" key="4">
    <source>
        <dbReference type="PROSITE-ProRule" id="PRU00686"/>
    </source>
</evidence>
<evidence type="ECO:0000305" key="5"/>
<comment type="function">
    <text evidence="2">Could act as a modulator of glutaredoxin biological activity (By similarity). May play a role in cytoskeleton organization (By similarity).</text>
</comment>
<comment type="subunit">
    <text evidence="1 2">Homodimer (By similarity). Interacts with MYO1C (via its IQ motifs); the interaction is dependent on calcium and takes place at membrane ruffles (By similarity).</text>
</comment>
<comment type="subcellular location">
    <subcellularLocation>
        <location evidence="2">Cytoplasm</location>
        <location evidence="2">Cytosol</location>
    </subcellularLocation>
    <subcellularLocation>
        <location evidence="2">Cell projection</location>
        <location evidence="2">Ruffle membrane</location>
    </subcellularLocation>
    <subcellularLocation>
        <location evidence="2">Nucleus</location>
    </subcellularLocation>
</comment>
<comment type="PTM">
    <text evidence="2">May be glycosylated.</text>
</comment>
<comment type="similarity">
    <text evidence="5">Belongs to the SH3BGR family.</text>
</comment>
<sequence length="93" mass="10438">MSGLRVYSTSVTGSREIKSQQSEVTRILDGKRIQYQLVDISQDNALRDEMRALAGNPKATPPQIVNGDQYCGDYELFVEAVEQNTLQEFLKLA</sequence>
<accession>Q3ZCL8</accession>
<feature type="initiator methionine" description="Removed" evidence="2">
    <location>
        <position position="1"/>
    </location>
</feature>
<feature type="chain" id="PRO_0000305925" description="SH3 domain-binding glutamic acid-rich-like protein 3">
    <location>
        <begin position="2"/>
        <end position="93"/>
    </location>
</feature>
<feature type="domain" description="Glutaredoxin" evidence="4">
    <location>
        <begin position="2"/>
        <end position="93"/>
    </location>
</feature>
<feature type="modified residue" description="N-acetylserine" evidence="2">
    <location>
        <position position="2"/>
    </location>
</feature>
<feature type="glycosylation site" description="O-linked (GalNAc...) threonine" evidence="3">
    <location>
        <position position="9"/>
    </location>
</feature>
<name>SH3L3_BOVIN</name>
<organism>
    <name type="scientific">Bos taurus</name>
    <name type="common">Bovine</name>
    <dbReference type="NCBI Taxonomy" id="9913"/>
    <lineage>
        <taxon>Eukaryota</taxon>
        <taxon>Metazoa</taxon>
        <taxon>Chordata</taxon>
        <taxon>Craniata</taxon>
        <taxon>Vertebrata</taxon>
        <taxon>Euteleostomi</taxon>
        <taxon>Mammalia</taxon>
        <taxon>Eutheria</taxon>
        <taxon>Laurasiatheria</taxon>
        <taxon>Artiodactyla</taxon>
        <taxon>Ruminantia</taxon>
        <taxon>Pecora</taxon>
        <taxon>Bovidae</taxon>
        <taxon>Bovinae</taxon>
        <taxon>Bos</taxon>
    </lineage>
</organism>
<reference key="1">
    <citation type="submission" date="2005-08" db="EMBL/GenBank/DDBJ databases">
        <authorList>
            <consortium name="NIH - Mammalian Gene Collection (MGC) project"/>
        </authorList>
    </citation>
    <scope>NUCLEOTIDE SEQUENCE [LARGE SCALE MRNA]</scope>
    <source>
        <strain>Crossbred X Angus</strain>
        <tissue>Ileum</tissue>
    </source>
</reference>
<proteinExistence type="inferred from homology"/>
<dbReference type="EMBL" id="BC102048">
    <property type="protein sequence ID" value="AAI02049.1"/>
    <property type="molecule type" value="mRNA"/>
</dbReference>
<dbReference type="RefSeq" id="NP_001029935.1">
    <property type="nucleotide sequence ID" value="NM_001034763.2"/>
</dbReference>
<dbReference type="BMRB" id="Q3ZCL8"/>
<dbReference type="SMR" id="Q3ZCL8"/>
<dbReference type="FunCoup" id="Q3ZCL8">
    <property type="interactions" value="1050"/>
</dbReference>
<dbReference type="IntAct" id="Q3ZCL8">
    <property type="interactions" value="1"/>
</dbReference>
<dbReference type="STRING" id="9913.ENSBTAP00000012599"/>
<dbReference type="GlyGen" id="Q3ZCL8">
    <property type="glycosylation" value="1 site"/>
</dbReference>
<dbReference type="PaxDb" id="9913-ENSBTAP00000012599"/>
<dbReference type="PeptideAtlas" id="Q3ZCL8"/>
<dbReference type="Ensembl" id="ENSBTAT00000012599.5">
    <property type="protein sequence ID" value="ENSBTAP00000012599.5"/>
    <property type="gene ID" value="ENSBTAG00000009580.5"/>
</dbReference>
<dbReference type="GeneID" id="614672"/>
<dbReference type="KEGG" id="bta:614672"/>
<dbReference type="CTD" id="83442"/>
<dbReference type="VEuPathDB" id="HostDB:ENSBTAG00000009580"/>
<dbReference type="VGNC" id="VGNC:106924">
    <property type="gene designation" value="SH3BGRL3"/>
</dbReference>
<dbReference type="eggNOG" id="KOG4023">
    <property type="taxonomic scope" value="Eukaryota"/>
</dbReference>
<dbReference type="GeneTree" id="ENSGT00940000157260"/>
<dbReference type="HOGENOM" id="CLU_127988_0_0_1"/>
<dbReference type="InParanoid" id="Q3ZCL8"/>
<dbReference type="OMA" id="QAEMMRI"/>
<dbReference type="OrthoDB" id="9932926at2759"/>
<dbReference type="Proteomes" id="UP000009136">
    <property type="component" value="Chromosome 2"/>
</dbReference>
<dbReference type="Bgee" id="ENSBTAG00000009580">
    <property type="expression patterns" value="Expressed in monocyte and 105 other cell types or tissues"/>
</dbReference>
<dbReference type="GO" id="GO:0005737">
    <property type="term" value="C:cytoplasm"/>
    <property type="evidence" value="ECO:0000318"/>
    <property type="project" value="GO_Central"/>
</dbReference>
<dbReference type="GO" id="GO:0005829">
    <property type="term" value="C:cytosol"/>
    <property type="evidence" value="ECO:0000250"/>
    <property type="project" value="UniProtKB"/>
</dbReference>
<dbReference type="GO" id="GO:0016604">
    <property type="term" value="C:nuclear body"/>
    <property type="evidence" value="ECO:0007669"/>
    <property type="project" value="Ensembl"/>
</dbReference>
<dbReference type="GO" id="GO:0032587">
    <property type="term" value="C:ruffle membrane"/>
    <property type="evidence" value="ECO:0000250"/>
    <property type="project" value="UniProtKB"/>
</dbReference>
<dbReference type="GO" id="GO:0007010">
    <property type="term" value="P:cytoskeleton organization"/>
    <property type="evidence" value="ECO:0000250"/>
    <property type="project" value="UniProtKB"/>
</dbReference>
<dbReference type="CDD" id="cd03030">
    <property type="entry name" value="GRX_SH3BGR"/>
    <property type="match status" value="1"/>
</dbReference>
<dbReference type="FunFam" id="3.40.30.10:FF:000132">
    <property type="entry name" value="SH3 domain-binding glutamic acid-rich-like protein 3"/>
    <property type="match status" value="1"/>
</dbReference>
<dbReference type="Gene3D" id="3.40.30.10">
    <property type="entry name" value="Glutaredoxin"/>
    <property type="match status" value="1"/>
</dbReference>
<dbReference type="InterPro" id="IPR006993">
    <property type="entry name" value="Glut_rich_SH3-bd"/>
</dbReference>
<dbReference type="InterPro" id="IPR051033">
    <property type="entry name" value="SH3BGR"/>
</dbReference>
<dbReference type="InterPro" id="IPR036249">
    <property type="entry name" value="Thioredoxin-like_sf"/>
</dbReference>
<dbReference type="PANTHER" id="PTHR12232">
    <property type="entry name" value="SH3 DOMAIN-BINDING GLUTAMIC ACID-RICH-LIKE PROTEIN"/>
    <property type="match status" value="1"/>
</dbReference>
<dbReference type="PANTHER" id="PTHR12232:SF3">
    <property type="entry name" value="SH3 DOMAIN-BINDING GLUTAMIC ACID-RICH-LIKE PROTEIN 3"/>
    <property type="match status" value="1"/>
</dbReference>
<dbReference type="Pfam" id="PF04908">
    <property type="entry name" value="SH3BGR"/>
    <property type="match status" value="1"/>
</dbReference>
<dbReference type="PIRSF" id="PIRSF008142">
    <property type="entry name" value="SH3-bind_E-rich_L"/>
    <property type="match status" value="1"/>
</dbReference>
<dbReference type="SUPFAM" id="SSF52833">
    <property type="entry name" value="Thioredoxin-like"/>
    <property type="match status" value="1"/>
</dbReference>
<dbReference type="PROSITE" id="PS51354">
    <property type="entry name" value="GLUTAREDOXIN_2"/>
    <property type="match status" value="1"/>
</dbReference>
<keyword id="KW-0007">Acetylation</keyword>
<keyword id="KW-1003">Cell membrane</keyword>
<keyword id="KW-0966">Cell projection</keyword>
<keyword id="KW-0963">Cytoplasm</keyword>
<keyword id="KW-0325">Glycoprotein</keyword>
<keyword id="KW-0472">Membrane</keyword>
<keyword id="KW-0539">Nucleus</keyword>
<keyword id="KW-1185">Reference proteome</keyword>